<proteinExistence type="evidence at protein level"/>
<evidence type="ECO:0000255" key="1">
    <source>
        <dbReference type="HAMAP-Rule" id="MF_01286"/>
    </source>
</evidence>
<evidence type="ECO:0000269" key="2">
    <source>
    </source>
</evidence>
<evidence type="ECO:0000303" key="3">
    <source>
    </source>
</evidence>
<evidence type="ECO:0000312" key="4">
    <source>
        <dbReference type="EMBL" id="AAB90826.1"/>
    </source>
</evidence>
<name>DGGGP_ARCFU</name>
<dbReference type="EC" id="2.5.1.42" evidence="1"/>
<dbReference type="EMBL" id="AE000782">
    <property type="protein sequence ID" value="AAB90826.1"/>
    <property type="molecule type" value="Genomic_DNA"/>
</dbReference>
<dbReference type="PIR" id="D69300">
    <property type="entry name" value="D69300"/>
</dbReference>
<dbReference type="SMR" id="O29843"/>
<dbReference type="STRING" id="224325.AF_0404"/>
<dbReference type="PaxDb" id="224325-AF_0404"/>
<dbReference type="EnsemblBacteria" id="AAB90826">
    <property type="protein sequence ID" value="AAB90826"/>
    <property type="gene ID" value="AF_0404"/>
</dbReference>
<dbReference type="KEGG" id="afu:AF_0404"/>
<dbReference type="eggNOG" id="arCOG00476">
    <property type="taxonomic scope" value="Archaea"/>
</dbReference>
<dbReference type="HOGENOM" id="CLU_073311_1_1_2"/>
<dbReference type="PhylomeDB" id="O29843"/>
<dbReference type="UniPathway" id="UPA00940"/>
<dbReference type="Proteomes" id="UP000002199">
    <property type="component" value="Chromosome"/>
</dbReference>
<dbReference type="GO" id="GO:0005886">
    <property type="term" value="C:plasma membrane"/>
    <property type="evidence" value="ECO:0007669"/>
    <property type="project" value="UniProtKB-SubCell"/>
</dbReference>
<dbReference type="GO" id="GO:0047295">
    <property type="term" value="F:geranylgeranylglycerol-phosphate geranylgeranyltransferase activity"/>
    <property type="evidence" value="ECO:0007669"/>
    <property type="project" value="UniProtKB-UniRule"/>
</dbReference>
<dbReference type="GO" id="GO:0000287">
    <property type="term" value="F:magnesium ion binding"/>
    <property type="evidence" value="ECO:0007669"/>
    <property type="project" value="UniProtKB-UniRule"/>
</dbReference>
<dbReference type="GO" id="GO:0046474">
    <property type="term" value="P:glycerophospholipid biosynthetic process"/>
    <property type="evidence" value="ECO:0007669"/>
    <property type="project" value="UniProtKB-UniRule"/>
</dbReference>
<dbReference type="CDD" id="cd13961">
    <property type="entry name" value="PT_UbiA_DGGGPS"/>
    <property type="match status" value="1"/>
</dbReference>
<dbReference type="Gene3D" id="1.10.357.140">
    <property type="entry name" value="UbiA prenyltransferase"/>
    <property type="match status" value="1"/>
</dbReference>
<dbReference type="Gene3D" id="1.20.120.1780">
    <property type="entry name" value="UbiA prenyltransferase"/>
    <property type="match status" value="1"/>
</dbReference>
<dbReference type="HAMAP" id="MF_01286">
    <property type="entry name" value="DGGGP_synth"/>
    <property type="match status" value="1"/>
</dbReference>
<dbReference type="InterPro" id="IPR023547">
    <property type="entry name" value="DGGGP_synth"/>
</dbReference>
<dbReference type="InterPro" id="IPR050475">
    <property type="entry name" value="Prenyltransferase_related"/>
</dbReference>
<dbReference type="InterPro" id="IPR000537">
    <property type="entry name" value="UbiA_prenyltransferase"/>
</dbReference>
<dbReference type="InterPro" id="IPR044878">
    <property type="entry name" value="UbiA_sf"/>
</dbReference>
<dbReference type="NCBIfam" id="NF009523">
    <property type="entry name" value="PRK12884.1"/>
    <property type="match status" value="1"/>
</dbReference>
<dbReference type="PANTHER" id="PTHR42723">
    <property type="entry name" value="CHLOROPHYLL SYNTHASE"/>
    <property type="match status" value="1"/>
</dbReference>
<dbReference type="PANTHER" id="PTHR42723:SF1">
    <property type="entry name" value="CHLOROPHYLL SYNTHASE, CHLOROPLASTIC"/>
    <property type="match status" value="1"/>
</dbReference>
<dbReference type="Pfam" id="PF01040">
    <property type="entry name" value="UbiA"/>
    <property type="match status" value="1"/>
</dbReference>
<accession>O29843</accession>
<organism>
    <name type="scientific">Archaeoglobus fulgidus (strain ATCC 49558 / DSM 4304 / JCM 9628 / NBRC 100126 / VC-16)</name>
    <dbReference type="NCBI Taxonomy" id="224325"/>
    <lineage>
        <taxon>Archaea</taxon>
        <taxon>Methanobacteriati</taxon>
        <taxon>Methanobacteriota</taxon>
        <taxon>Archaeoglobi</taxon>
        <taxon>Archaeoglobales</taxon>
        <taxon>Archaeoglobaceae</taxon>
        <taxon>Archaeoglobus</taxon>
    </lineage>
</organism>
<feature type="chain" id="PRO_0000435144" description="Digeranylgeranylglyceryl phosphate synthase">
    <location>
        <begin position="1"/>
        <end position="293"/>
    </location>
</feature>
<feature type="transmembrane region" description="Helical" evidence="1">
    <location>
        <begin position="26"/>
        <end position="46"/>
    </location>
</feature>
<feature type="transmembrane region" description="Helical" evidence="1">
    <location>
        <begin position="50"/>
        <end position="70"/>
    </location>
</feature>
<feature type="transmembrane region" description="Helical" evidence="1">
    <location>
        <begin position="107"/>
        <end position="127"/>
    </location>
</feature>
<feature type="transmembrane region" description="Helical" evidence="1">
    <location>
        <begin position="140"/>
        <end position="160"/>
    </location>
</feature>
<feature type="transmembrane region" description="Helical" evidence="1">
    <location>
        <begin position="215"/>
        <end position="235"/>
    </location>
</feature>
<feature type="transmembrane region" description="Helical" evidence="1">
    <location>
        <begin position="237"/>
        <end position="257"/>
    </location>
</feature>
<feature type="transmembrane region" description="Helical" evidence="1">
    <location>
        <begin position="273"/>
        <end position="293"/>
    </location>
</feature>
<comment type="function">
    <text evidence="1 2">Prenyltransferase that catalyzes the transfer of the geranylgeranyl moiety of geranylgeranyl diphosphate (GGPP) to the C2 hydroxyl of (S)-3-O-geranylgeranylglyceryl phosphate (GGGP). This reaction is the second ether-bond-formation step in the biosynthesis of archaeal membrane lipids.</text>
</comment>
<comment type="catalytic activity">
    <reaction evidence="1 2">
        <text>sn-3-O-(geranylgeranyl)glycerol 1-phosphate + (2E,6E,10E)-geranylgeranyl diphosphate = 2,3-bis-O-(geranylgeranyl)-sn-glycerol 1-phosphate + diphosphate</text>
        <dbReference type="Rhea" id="RHEA:18109"/>
        <dbReference type="ChEBI" id="CHEBI:33019"/>
        <dbReference type="ChEBI" id="CHEBI:57677"/>
        <dbReference type="ChEBI" id="CHEBI:58756"/>
        <dbReference type="ChEBI" id="CHEBI:58837"/>
        <dbReference type="EC" id="2.5.1.42"/>
    </reaction>
</comment>
<comment type="cofactor">
    <cofactor evidence="1">
        <name>Mg(2+)</name>
        <dbReference type="ChEBI" id="CHEBI:18420"/>
    </cofactor>
</comment>
<comment type="pathway">
    <text evidence="1 2">Membrane lipid metabolism; glycerophospholipid metabolism.</text>
</comment>
<comment type="subcellular location">
    <subcellularLocation>
        <location evidence="1">Cell membrane</location>
        <topology evidence="1">Multi-pass membrane protein</topology>
    </subcellularLocation>
</comment>
<comment type="similarity">
    <text evidence="1">Belongs to the UbiA prenyltransferase family. DGGGP synthase subfamily.</text>
</comment>
<reference key="1">
    <citation type="journal article" date="1997" name="Nature">
        <title>The complete genome sequence of the hyperthermophilic, sulphate-reducing archaeon Archaeoglobus fulgidus.</title>
        <authorList>
            <person name="Klenk H.-P."/>
            <person name="Clayton R.A."/>
            <person name="Tomb J.-F."/>
            <person name="White O."/>
            <person name="Nelson K.E."/>
            <person name="Ketchum K.A."/>
            <person name="Dodson R.J."/>
            <person name="Gwinn M.L."/>
            <person name="Hickey E.K."/>
            <person name="Peterson J.D."/>
            <person name="Richardson D.L."/>
            <person name="Kerlavage A.R."/>
            <person name="Graham D.E."/>
            <person name="Kyrpides N.C."/>
            <person name="Fleischmann R.D."/>
            <person name="Quackenbush J."/>
            <person name="Lee N.H."/>
            <person name="Sutton G.G."/>
            <person name="Gill S.R."/>
            <person name="Kirkness E.F."/>
            <person name="Dougherty B.A."/>
            <person name="McKenney K."/>
            <person name="Adams M.D."/>
            <person name="Loftus B.J."/>
            <person name="Peterson S.N."/>
            <person name="Reich C.I."/>
            <person name="McNeil L.K."/>
            <person name="Badger J.H."/>
            <person name="Glodek A."/>
            <person name="Zhou L."/>
            <person name="Overbeek R."/>
            <person name="Gocayne J.D."/>
            <person name="Weidman J.F."/>
            <person name="McDonald L.A."/>
            <person name="Utterback T.R."/>
            <person name="Cotton M.D."/>
            <person name="Spriggs T."/>
            <person name="Artiach P."/>
            <person name="Kaine B.P."/>
            <person name="Sykes S.M."/>
            <person name="Sadow P.W."/>
            <person name="D'Andrea K.P."/>
            <person name="Bowman C."/>
            <person name="Fujii C."/>
            <person name="Garland S.A."/>
            <person name="Mason T.M."/>
            <person name="Olsen G.J."/>
            <person name="Fraser C.M."/>
            <person name="Smith H.O."/>
            <person name="Woese C.R."/>
            <person name="Venter J.C."/>
        </authorList>
    </citation>
    <scope>NUCLEOTIDE SEQUENCE [LARGE SCALE GENOMIC DNA]</scope>
    <source>
        <strain>ATCC 49558 / DSM 4304 / JCM 9628 / NBRC 100126 / VC-16</strain>
    </source>
</reference>
<reference key="2">
    <citation type="journal article" date="2014" name="Chem. Biol.">
        <title>Identification of CDP-archaeol synthase, a missing link of ether lipid biosynthesis in Archaea.</title>
        <authorList>
            <person name="Jain S."/>
            <person name="Caforio A."/>
            <person name="Fodran P."/>
            <person name="Lolkema J.S."/>
            <person name="Minnaard A.J."/>
            <person name="Driessen A.J."/>
        </authorList>
    </citation>
    <scope>FUNCTION</scope>
    <scope>CATALYTIC ACTIVITY</scope>
    <scope>PATHWAY</scope>
    <source>
        <strain>ATCC 49558 / DSM 4304 / JCM 9628 / NBRC 100126 / VC-16</strain>
    </source>
</reference>
<keyword id="KW-1003">Cell membrane</keyword>
<keyword id="KW-0444">Lipid biosynthesis</keyword>
<keyword id="KW-0443">Lipid metabolism</keyword>
<keyword id="KW-0460">Magnesium</keyword>
<keyword id="KW-0472">Membrane</keyword>
<keyword id="KW-0594">Phospholipid biosynthesis</keyword>
<keyword id="KW-1208">Phospholipid metabolism</keyword>
<keyword id="KW-1185">Reference proteome</keyword>
<keyword id="KW-0808">Transferase</keyword>
<keyword id="KW-0812">Transmembrane</keyword>
<keyword id="KW-1133">Transmembrane helix</keyword>
<sequence length="293" mass="32652">MRRVSMRSLKRYLKAIWDLLRLEHGLMYGFGVVIGIYVSDPFFSDLWKLLLGYLTAVFLQASTFALNDYFDYEVDLVNNRTDRPLVRGDLSRRIALALAIALMPPGFVAAYLISPLAFIFAFAVSVLACLYDYKLKELGFAGNVYIAFTMAAPFLFGSIISSGWITEKTALLASMAFLTGVGREIMKGIEDVEGDALRDVRSLARTMGERKAASIASLFYLTAVSISPIPLFLLPEFLFDLKYAVPVSVTDVLLIYVALRLVGDYERESIRKYRKVTLVAMVLGLVGFFAGAF</sequence>
<protein>
    <recommendedName>
        <fullName evidence="1">Digeranylgeranylglyceryl phosphate synthase</fullName>
        <shortName evidence="1 3">DGGGP synthase</shortName>
        <shortName evidence="1">DGGGPS</shortName>
        <ecNumber evidence="1">2.5.1.42</ecNumber>
    </recommendedName>
    <alternativeName>
        <fullName evidence="1">(S)-2,3-di-O-geranylgeranylglyceryl phosphate synthase</fullName>
    </alternativeName>
    <alternativeName>
        <fullName evidence="1">Geranylgeranylglycerol-phosphate geranylgeranyltransferase</fullName>
    </alternativeName>
</protein>
<gene>
    <name evidence="4" type="ordered locus">AF_0404</name>
</gene>